<comment type="function">
    <text>Zeins are major seed storage proteins.</text>
</comment>
<comment type="miscellaneous">
    <text>The alpha zeins of 19 kDa and 22 kDa account for 70% of the total zein fraction. They are encoded by a large multigene family.</text>
</comment>
<comment type="miscellaneous">
    <text evidence="1">Structurally, 22K and 19K zeins are composed of nine adjacent, topologically antiparallel helices clustered within a distorted cylinder.</text>
</comment>
<comment type="similarity">
    <text evidence="2">Belongs to the zein family.</text>
</comment>
<comment type="sequence caution" evidence="2">
    <conflict type="erroneous termination">
        <sequence resource="EMBL-CDS" id="CAA42105"/>
    </conflict>
    <text>Extended C-terminus.</text>
</comment>
<evidence type="ECO:0000250" key="1">
    <source>
        <dbReference type="UniProtKB" id="P04698"/>
    </source>
</evidence>
<evidence type="ECO:0000305" key="2"/>
<accession>P24450</accession>
<feature type="signal peptide">
    <location>
        <begin position="1"/>
        <end position="21"/>
    </location>
</feature>
<feature type="chain" id="PRO_0000041623" description="Zein-alpha PMS2">
    <location>
        <begin position="22"/>
        <end position="233"/>
    </location>
</feature>
<protein>
    <recommendedName>
        <fullName>Zein-alpha PMS2</fullName>
    </recommendedName>
    <alternativeName>
        <fullName>19 kDa zein PMS2</fullName>
    </alternativeName>
</protein>
<name>ZEAD_MAIZE</name>
<sequence length="233" mass="25515">MAAKIFCFLMLLGLSASVATATIFPQCSQAPIASLLPPYLSPAVSSMCENPIVQPYRIQQAIATGILPLSPLFLQQPSALLQQLPLVHLVAQNIRAQQLQQLVLANLAAYSQQHQFLPFNQLAALNSAAYLQQQLPFSQLVAAYPRQFLPFNQLAALNSAAYLQQQQLLPFSQLADVSPAAFLTQQQLLPFYLHAMPNAGTLLQLQQLLPFNQLALTNSTVFYQQPIIGGALF</sequence>
<organism>
    <name type="scientific">Zea mays</name>
    <name type="common">Maize</name>
    <dbReference type="NCBI Taxonomy" id="4577"/>
    <lineage>
        <taxon>Eukaryota</taxon>
        <taxon>Viridiplantae</taxon>
        <taxon>Streptophyta</taxon>
        <taxon>Embryophyta</taxon>
        <taxon>Tracheophyta</taxon>
        <taxon>Spermatophyta</taxon>
        <taxon>Magnoliopsida</taxon>
        <taxon>Liliopsida</taxon>
        <taxon>Poales</taxon>
        <taxon>Poaceae</taxon>
        <taxon>PACMAD clade</taxon>
        <taxon>Panicoideae</taxon>
        <taxon>Andropogonodae</taxon>
        <taxon>Andropogoneae</taxon>
        <taxon>Tripsacinae</taxon>
        <taxon>Zea</taxon>
    </lineage>
</organism>
<proteinExistence type="inferred from homology"/>
<gene>
    <name type="primary">ZMPMS2</name>
</gene>
<dbReference type="EMBL" id="X58700">
    <property type="protein sequence ID" value="CAA41543.1"/>
    <property type="molecule type" value="Genomic_DNA"/>
</dbReference>
<dbReference type="EMBL" id="X59526">
    <property type="protein sequence ID" value="CAA42105.1"/>
    <property type="status" value="ALT_SEQ"/>
    <property type="molecule type" value="Genomic_DNA"/>
</dbReference>
<dbReference type="PIR" id="S15656">
    <property type="entry name" value="S15656"/>
</dbReference>
<dbReference type="STRING" id="4577.P24450"/>
<dbReference type="PaxDb" id="4577-GRMZM2G008913_P01"/>
<dbReference type="MaizeGDB" id="58096"/>
<dbReference type="eggNOG" id="ENOG502R4CQ">
    <property type="taxonomic scope" value="Eukaryota"/>
</dbReference>
<dbReference type="InParanoid" id="P24450"/>
<dbReference type="Proteomes" id="UP000007305">
    <property type="component" value="Unplaced"/>
</dbReference>
<dbReference type="ExpressionAtlas" id="P24450">
    <property type="expression patterns" value="baseline and differential"/>
</dbReference>
<dbReference type="GO" id="GO:0045735">
    <property type="term" value="F:nutrient reservoir activity"/>
    <property type="evidence" value="ECO:0007669"/>
    <property type="project" value="UniProtKB-KW"/>
</dbReference>
<dbReference type="InterPro" id="IPR002530">
    <property type="entry name" value="Zein"/>
</dbReference>
<dbReference type="InterPro" id="IPR051903">
    <property type="entry name" value="Zein-alpha"/>
</dbReference>
<dbReference type="PANTHER" id="PTHR48214">
    <property type="entry name" value="ZEIN-ALPHA PMS2"/>
    <property type="match status" value="1"/>
</dbReference>
<dbReference type="PANTHER" id="PTHR48214:SF1">
    <property type="entry name" value="ZEIN-ALPHA PMS2"/>
    <property type="match status" value="1"/>
</dbReference>
<dbReference type="Pfam" id="PF01559">
    <property type="entry name" value="Zein"/>
    <property type="match status" value="2"/>
</dbReference>
<keyword id="KW-1185">Reference proteome</keyword>
<keyword id="KW-0677">Repeat</keyword>
<keyword id="KW-0708">Seed storage protein</keyword>
<keyword id="KW-0732">Signal</keyword>
<keyword id="KW-0758">Storage protein</keyword>
<reference key="1">
    <citation type="journal article" date="1989" name="Gene">
        <title>Analysis of distal flanking regions of maize 19-kDa zein genes.</title>
        <authorList>
            <person name="Quayle T.J.A."/>
            <person name="Brown J.W.S."/>
            <person name="Feix G."/>
        </authorList>
    </citation>
    <scope>NUCLEOTIDE SEQUENCE [GENOMIC DNA]</scope>
    <source>
        <strain>cv. A619</strain>
    </source>
</reference>
<reference key="2">
    <citation type="journal article" date="1985" name="Eur. J. Cell Biol.">
        <title>Expression of zein genes in Acetabularia mediterranea.</title>
        <authorList>
            <person name="Langridge P."/>
            <person name="Brown J.W.S."/>
            <person name="Pintor-Toro J.A."/>
            <person name="Feix G."/>
        </authorList>
    </citation>
    <scope>NUCLEOTIDE SEQUENCE [GENOMIC DNA]</scope>
</reference>